<organism>
    <name type="scientific">Rattus norvegicus</name>
    <name type="common">Rat</name>
    <dbReference type="NCBI Taxonomy" id="10116"/>
    <lineage>
        <taxon>Eukaryota</taxon>
        <taxon>Metazoa</taxon>
        <taxon>Chordata</taxon>
        <taxon>Craniata</taxon>
        <taxon>Vertebrata</taxon>
        <taxon>Euteleostomi</taxon>
        <taxon>Mammalia</taxon>
        <taxon>Eutheria</taxon>
        <taxon>Euarchontoglires</taxon>
        <taxon>Glires</taxon>
        <taxon>Rodentia</taxon>
        <taxon>Myomorpha</taxon>
        <taxon>Muroidea</taxon>
        <taxon>Muridae</taxon>
        <taxon>Murinae</taxon>
        <taxon>Rattus</taxon>
    </lineage>
</organism>
<accession>P05178</accession>
<keyword id="KW-0007">Acetylation</keyword>
<keyword id="KW-0256">Endoplasmic reticulum</keyword>
<keyword id="KW-0349">Heme</keyword>
<keyword id="KW-0408">Iron</keyword>
<keyword id="KW-0472">Membrane</keyword>
<keyword id="KW-0479">Metal-binding</keyword>
<keyword id="KW-0492">Microsome</keyword>
<keyword id="KW-0503">Monooxygenase</keyword>
<keyword id="KW-0560">Oxidoreductase</keyword>
<keyword id="KW-1185">Reference proteome</keyword>
<evidence type="ECO:0000250" key="1"/>
<evidence type="ECO:0000250" key="2">
    <source>
        <dbReference type="UniProtKB" id="Q64458"/>
    </source>
</evidence>
<evidence type="ECO:0000305" key="3"/>
<reference key="1">
    <citation type="journal article" date="1988" name="J. Biol. Chem.">
        <title>Complementary DNA cloning of cytochrome P-450s related to P-450(M-1) from the complementary DNA library of female rat livers. Predicted primary structures for P-450f, PB-1, and PB-1-related protein with a bizarre replacement block and their mode of transcriptional expression.</title>
        <authorList>
            <person name="Kimura H."/>
            <person name="Yoshioka H."/>
            <person name="Sogawa K."/>
            <person name="Sakai Y."/>
            <person name="Fujii-Kuriyama Y."/>
        </authorList>
    </citation>
    <scope>NUCLEOTIDE SEQUENCE</scope>
    <source>
        <tissue>Liver</tissue>
    </source>
</reference>
<reference key="2">
    <citation type="journal article" date="1986" name="J. Biol. Chem.">
        <title>Sequence of two related P-450 mRNAs transcriptionally increased during rat development. An R.dre.1 sequence occupies the complete 3' untranslated region of a liver mRNA.</title>
        <authorList>
            <person name="Gonzalez F.J."/>
            <person name="Kimura S."/>
            <person name="Song B.-J."/>
            <person name="Pastewka J."/>
            <person name="Gelboin H.V."/>
            <person name="Hardwick J.P."/>
        </authorList>
    </citation>
    <scope>NUCLEOTIDE SEQUENCE [MRNA] OF 6-490</scope>
</reference>
<reference key="3">
    <citation type="journal article" date="1986" name="Biochemistry">
        <title>Isolation and characterization of cDNA clones for cytochromes P-450 immunochemically related to rat hepatic P-450 form PB-1.</title>
        <authorList>
            <person name="Friedberg T."/>
            <person name="Waxman D.J."/>
            <person name="Atchison M."/>
            <person name="Kumar A."/>
            <person name="Haaparanta T."/>
            <person name="Raphael C."/>
            <person name="Adesnik M."/>
        </authorList>
    </citation>
    <scope>NUCLEOTIDE SEQUENCE OF 132-267</scope>
</reference>
<reference key="4">
    <citation type="journal article" date="1988" name="Nucleic Acids Res.">
        <title>Sequence of the 5' end of the developmentally regulated rat P450 PB1 (P450IIC6) gene.</title>
        <authorList>
            <person name="Umeno M."/>
            <person name="Matsunaga E."/>
            <person name="Morris S."/>
            <person name="Gelboin H.V."/>
            <person name="Gonzalez F.J."/>
        </authorList>
    </citation>
    <scope>NUCLEOTIDE SEQUENCE [GENOMIC DNA] OF 1-56</scope>
</reference>
<gene>
    <name type="primary">Cyp2c6</name>
    <name type="synonym">Cyp2c-6</name>
</gene>
<sequence length="490" mass="56003">MDLVMLLVLTLTCLILLSIWRQSSGRGKLPPGPIPLPIIGNIFQLNVKNITQSLTSFSKVYGPVFTLYFGTKPTVILHGYEAVKEALIDHGEEFAERGSFPVAEKINKDLGIVFSHGNRWKEIRRFTLTTLRNLGMGKRNIEDRVQEEARCLVEELRKTNGSPCDPTFILGCAPCNVICSIIFQNRFDYKDQDFLNLMEKLNENMKILSSPWTQFCSFFPVLIDYCPGSHTTLAKNVYHIRNYLLKKIKEHQESLDVTNPRDFIDYYLIKWKQENHNPHSEFTLENLSITVTDLFGAGTETTSTTLRYALLLLLKCPEVTAKVQEEIDRVVGKHRSPCMQDRSRMPYTDAHDHEVQRFIDLIPTNLPHAVTCDIKFRNYLIPKGTTIITSLSSVLHDSKEFPDPEIFDPGHFLDGNGKFKKSDYFMPFSAGKRMCAGEGLARMELFLFLTTILQNFKLKSVLHPKDIDTTPVFNGFASLPPFYELCFIPL</sequence>
<proteinExistence type="evidence at transcript level"/>
<dbReference type="EC" id="1.14.14.1"/>
<dbReference type="EMBL" id="K03501">
    <property type="protein sequence ID" value="AAA41066.1"/>
    <property type="molecule type" value="mRNA"/>
</dbReference>
<dbReference type="EMBL" id="M13711">
    <property type="protein sequence ID" value="AAA41065.1"/>
    <property type="molecule type" value="mRNA"/>
</dbReference>
<dbReference type="EMBL" id="X06712">
    <property type="protein sequence ID" value="CAA29899.1"/>
    <property type="molecule type" value="Genomic_DNA"/>
</dbReference>
<dbReference type="PIR" id="S00955">
    <property type="entry name" value="A25954"/>
</dbReference>
<dbReference type="SMR" id="P05178"/>
<dbReference type="FunCoup" id="P05178">
    <property type="interactions" value="59"/>
</dbReference>
<dbReference type="IntAct" id="P05178">
    <property type="interactions" value="1"/>
</dbReference>
<dbReference type="STRING" id="10116.ENSRNOP00000051625"/>
<dbReference type="BindingDB" id="P05178"/>
<dbReference type="ChEMBL" id="CHEMBL1907986"/>
<dbReference type="DrugBank" id="DB13746">
    <property type="generic name" value="Bioallethrin"/>
</dbReference>
<dbReference type="DrugBank" id="DB00266">
    <property type="generic name" value="Dicoumarol"/>
</dbReference>
<dbReference type="PaxDb" id="10116-ENSRNOP00000051625"/>
<dbReference type="AGR" id="RGD:619934"/>
<dbReference type="RGD" id="619934">
    <property type="gene designation" value="Cyp2c6"/>
</dbReference>
<dbReference type="eggNOG" id="KOG0156">
    <property type="taxonomic scope" value="Eukaryota"/>
</dbReference>
<dbReference type="InParanoid" id="P05178"/>
<dbReference type="PhylomeDB" id="P05178"/>
<dbReference type="Reactome" id="R-RNO-211981">
    <property type="pathway name" value="Xenobiotics"/>
</dbReference>
<dbReference type="SABIO-RK" id="P05178"/>
<dbReference type="PRO" id="PR:P05178"/>
<dbReference type="Proteomes" id="UP000002494">
    <property type="component" value="Unplaced"/>
</dbReference>
<dbReference type="GO" id="GO:0005737">
    <property type="term" value="C:cytoplasm"/>
    <property type="evidence" value="ECO:0000318"/>
    <property type="project" value="GO_Central"/>
</dbReference>
<dbReference type="GO" id="GO:0005789">
    <property type="term" value="C:endoplasmic reticulum membrane"/>
    <property type="evidence" value="ECO:0007669"/>
    <property type="project" value="UniProtKB-SubCell"/>
</dbReference>
<dbReference type="GO" id="GO:0043231">
    <property type="term" value="C:intracellular membrane-bounded organelle"/>
    <property type="evidence" value="ECO:0000318"/>
    <property type="project" value="GO_Central"/>
</dbReference>
<dbReference type="GO" id="GO:0008404">
    <property type="term" value="F:arachidonate 14,15-epoxygenase activity"/>
    <property type="evidence" value="ECO:0000266"/>
    <property type="project" value="RGD"/>
</dbReference>
<dbReference type="GO" id="GO:0019899">
    <property type="term" value="F:enzyme binding"/>
    <property type="evidence" value="ECO:0000266"/>
    <property type="project" value="RGD"/>
</dbReference>
<dbReference type="GO" id="GO:0020037">
    <property type="term" value="F:heme binding"/>
    <property type="evidence" value="ECO:0000266"/>
    <property type="project" value="RGD"/>
</dbReference>
<dbReference type="GO" id="GO:0005506">
    <property type="term" value="F:iron ion binding"/>
    <property type="evidence" value="ECO:0007669"/>
    <property type="project" value="InterPro"/>
</dbReference>
<dbReference type="GO" id="GO:0120319">
    <property type="term" value="F:long-chain fatty acid omega-1 hydroxylase activity"/>
    <property type="evidence" value="ECO:0000266"/>
    <property type="project" value="RGD"/>
</dbReference>
<dbReference type="GO" id="GO:0004497">
    <property type="term" value="F:monooxygenase activity"/>
    <property type="evidence" value="ECO:0000314"/>
    <property type="project" value="RGD"/>
</dbReference>
<dbReference type="GO" id="GO:0016491">
    <property type="term" value="F:oxidoreductase activity"/>
    <property type="evidence" value="ECO:0000266"/>
    <property type="project" value="RGD"/>
</dbReference>
<dbReference type="GO" id="GO:0016712">
    <property type="term" value="F:oxidoreductase activity, acting on paired donors, with incorporation or reduction of molecular oxygen, reduced flavin or flavoprotein as one donor, and incorporation of one atom of oxygen"/>
    <property type="evidence" value="ECO:0000318"/>
    <property type="project" value="GO_Central"/>
</dbReference>
<dbReference type="GO" id="GO:0008395">
    <property type="term" value="F:steroid hydroxylase activity"/>
    <property type="evidence" value="ECO:0000266"/>
    <property type="project" value="RGD"/>
</dbReference>
<dbReference type="GO" id="GO:0019369">
    <property type="term" value="P:arachidonate metabolic process"/>
    <property type="evidence" value="ECO:0000266"/>
    <property type="project" value="RGD"/>
</dbReference>
<dbReference type="GO" id="GO:0001676">
    <property type="term" value="P:long-chain fatty acid metabolic process"/>
    <property type="evidence" value="ECO:0000266"/>
    <property type="project" value="RGD"/>
</dbReference>
<dbReference type="GO" id="GO:0016098">
    <property type="term" value="P:monoterpenoid metabolic process"/>
    <property type="evidence" value="ECO:0000266"/>
    <property type="project" value="RGD"/>
</dbReference>
<dbReference type="GO" id="GO:0006082">
    <property type="term" value="P:organic acid metabolic process"/>
    <property type="evidence" value="ECO:0000318"/>
    <property type="project" value="GO_Central"/>
</dbReference>
<dbReference type="GO" id="GO:0031667">
    <property type="term" value="P:response to nutrient levels"/>
    <property type="evidence" value="ECO:0000270"/>
    <property type="project" value="RGD"/>
</dbReference>
<dbReference type="GO" id="GO:0009410">
    <property type="term" value="P:response to xenobiotic stimulus"/>
    <property type="evidence" value="ECO:0000270"/>
    <property type="project" value="RGD"/>
</dbReference>
<dbReference type="GO" id="GO:0008202">
    <property type="term" value="P:steroid metabolic process"/>
    <property type="evidence" value="ECO:0000266"/>
    <property type="project" value="RGD"/>
</dbReference>
<dbReference type="GO" id="GO:0042178">
    <property type="term" value="P:xenobiotic catabolic process"/>
    <property type="evidence" value="ECO:0000314"/>
    <property type="project" value="RGD"/>
</dbReference>
<dbReference type="GO" id="GO:0006805">
    <property type="term" value="P:xenobiotic metabolic process"/>
    <property type="evidence" value="ECO:0000266"/>
    <property type="project" value="RGD"/>
</dbReference>
<dbReference type="CDD" id="cd20665">
    <property type="entry name" value="CYP2C-like"/>
    <property type="match status" value="1"/>
</dbReference>
<dbReference type="FunFam" id="1.10.630.10:FF:000299">
    <property type="entry name" value="Cytochrome P450 2C9"/>
    <property type="match status" value="1"/>
</dbReference>
<dbReference type="Gene3D" id="1.10.630.10">
    <property type="entry name" value="Cytochrome P450"/>
    <property type="match status" value="1"/>
</dbReference>
<dbReference type="InterPro" id="IPR001128">
    <property type="entry name" value="Cyt_P450"/>
</dbReference>
<dbReference type="InterPro" id="IPR017972">
    <property type="entry name" value="Cyt_P450_CS"/>
</dbReference>
<dbReference type="InterPro" id="IPR002401">
    <property type="entry name" value="Cyt_P450_E_grp-I"/>
</dbReference>
<dbReference type="InterPro" id="IPR036396">
    <property type="entry name" value="Cyt_P450_sf"/>
</dbReference>
<dbReference type="InterPro" id="IPR050182">
    <property type="entry name" value="Cytochrome_P450_fam2"/>
</dbReference>
<dbReference type="PANTHER" id="PTHR24300:SF384">
    <property type="entry name" value="CYTOCHROME P450 2C29-RELATED"/>
    <property type="match status" value="1"/>
</dbReference>
<dbReference type="PANTHER" id="PTHR24300">
    <property type="entry name" value="CYTOCHROME P450 508A4-RELATED"/>
    <property type="match status" value="1"/>
</dbReference>
<dbReference type="Pfam" id="PF00067">
    <property type="entry name" value="p450"/>
    <property type="match status" value="1"/>
</dbReference>
<dbReference type="PRINTS" id="PR00463">
    <property type="entry name" value="EP450I"/>
</dbReference>
<dbReference type="PRINTS" id="PR00385">
    <property type="entry name" value="P450"/>
</dbReference>
<dbReference type="SUPFAM" id="SSF48264">
    <property type="entry name" value="Cytochrome P450"/>
    <property type="match status" value="1"/>
</dbReference>
<dbReference type="PROSITE" id="PS00086">
    <property type="entry name" value="CYTOCHROME_P450"/>
    <property type="match status" value="1"/>
</dbReference>
<feature type="chain" id="PRO_0000051697" description="Cytochrome P450 2C6">
    <location>
        <begin position="1"/>
        <end position="490"/>
    </location>
</feature>
<feature type="binding site" description="axial binding residue">
    <location>
        <position position="435"/>
    </location>
    <ligand>
        <name>heme</name>
        <dbReference type="ChEBI" id="CHEBI:30413"/>
    </ligand>
    <ligandPart>
        <name>Fe</name>
        <dbReference type="ChEBI" id="CHEBI:18248"/>
    </ligandPart>
</feature>
<feature type="modified residue" description="N6-acetyllysine" evidence="2">
    <location>
        <position position="249"/>
    </location>
</feature>
<feature type="modified residue" description="N6-acetyllysine" evidence="2">
    <location>
        <position position="375"/>
    </location>
</feature>
<feature type="sequence conflict" description="In Ref. 3; no nucleotide entry." evidence="3" ref="3">
    <original>N</original>
    <variation>D</variation>
    <location>
        <position position="133"/>
    </location>
</feature>
<feature type="sequence conflict" description="In Ref. 3; no nucleotide entry." evidence="3" ref="3">
    <original>W</original>
    <variation>S</variation>
    <location>
        <position position="212"/>
    </location>
</feature>
<feature type="sequence conflict" description="In Ref. 3; no nucleotide entry." evidence="3" ref="3">
    <original>D</original>
    <variation>N</variation>
    <location>
        <position position="262"/>
    </location>
</feature>
<protein>
    <recommendedName>
        <fullName>Cytochrome P450 2C6</fullName>
        <ecNumber>1.14.14.1</ecNumber>
    </recommendedName>
    <alternativeName>
        <fullName>CYPIIC6</fullName>
    </alternativeName>
    <alternativeName>
        <fullName>Cytochrome P450 PB1</fullName>
    </alternativeName>
    <alternativeName>
        <fullName>PTF2</fullName>
    </alternativeName>
</protein>
<comment type="function">
    <text>Cytochromes P450 are a group of heme-thiolate monooxygenases. In liver microsomes, this enzyme is involved in an NADPH-dependent electron transport pathway. It oxidizes a variety of structurally unrelated compounds, including steroids, fatty acids, and xenobiotics.</text>
</comment>
<comment type="catalytic activity">
    <reaction>
        <text>an organic molecule + reduced [NADPH--hemoprotein reductase] + O2 = an alcohol + oxidized [NADPH--hemoprotein reductase] + H2O + H(+)</text>
        <dbReference type="Rhea" id="RHEA:17149"/>
        <dbReference type="Rhea" id="RHEA-COMP:11964"/>
        <dbReference type="Rhea" id="RHEA-COMP:11965"/>
        <dbReference type="ChEBI" id="CHEBI:15377"/>
        <dbReference type="ChEBI" id="CHEBI:15378"/>
        <dbReference type="ChEBI" id="CHEBI:15379"/>
        <dbReference type="ChEBI" id="CHEBI:30879"/>
        <dbReference type="ChEBI" id="CHEBI:57618"/>
        <dbReference type="ChEBI" id="CHEBI:58210"/>
        <dbReference type="ChEBI" id="CHEBI:142491"/>
        <dbReference type="EC" id="1.14.14.1"/>
    </reaction>
</comment>
<comment type="cofactor">
    <cofactor evidence="1">
        <name>heme</name>
        <dbReference type="ChEBI" id="CHEBI:30413"/>
    </cofactor>
</comment>
<comment type="subcellular location">
    <subcellularLocation>
        <location>Endoplasmic reticulum membrane</location>
        <topology>Peripheral membrane protein</topology>
    </subcellularLocation>
    <subcellularLocation>
        <location>Microsome membrane</location>
        <topology>Peripheral membrane protein</topology>
    </subcellularLocation>
</comment>
<comment type="induction">
    <text>P450 can be induced to high levels in liver and other tissues by various foreign compounds, including drugs, pesticides, and carcinogens.</text>
</comment>
<comment type="similarity">
    <text evidence="3">Belongs to the cytochrome P450 family.</text>
</comment>
<name>CP2C6_RAT</name>